<gene>
    <name evidence="5" type="primary">rpo2C</name>
    <name type="synonym">rpoB1</name>
    <name type="synonym">rpoU</name>
</gene>
<proteinExistence type="inferred from homology"/>
<comment type="function">
    <text evidence="2">DNA-dependent RNA polymerase (RNAP) catalyzes the transcription of DNA into RNA using the four ribonucleoside triphosphates as substrates. The Rpo2 subunit (Rpo2N and Rpo2C in this organism) is implicated in DNA promoter recognition and in nucleotide binding.</text>
</comment>
<comment type="catalytic activity">
    <reaction evidence="3">
        <text>RNA(n) + a ribonucleoside 5'-triphosphate = RNA(n+1) + diphosphate</text>
        <dbReference type="Rhea" id="RHEA:21248"/>
        <dbReference type="Rhea" id="RHEA-COMP:14527"/>
        <dbReference type="Rhea" id="RHEA-COMP:17342"/>
        <dbReference type="ChEBI" id="CHEBI:33019"/>
        <dbReference type="ChEBI" id="CHEBI:61557"/>
        <dbReference type="ChEBI" id="CHEBI:140395"/>
        <dbReference type="EC" id="2.7.7.6"/>
    </reaction>
</comment>
<comment type="cofactor">
    <cofactor evidence="2">
        <name>Zn(2+)</name>
        <dbReference type="ChEBI" id="CHEBI:29105"/>
    </cofactor>
    <text evidence="2">Binds 1 Zn(2+) per subunit.</text>
</comment>
<comment type="subunit">
    <text evidence="2">Part of the RNA polymerase complex.</text>
</comment>
<comment type="subcellular location">
    <subcellularLocation>
        <location evidence="2">Cytoplasm</location>
    </subcellularLocation>
</comment>
<comment type="similarity">
    <text evidence="5">Belongs to the RNA polymerase beta chain family.</text>
</comment>
<keyword id="KW-0963">Cytoplasm</keyword>
<keyword id="KW-0238">DNA-binding</keyword>
<keyword id="KW-0240">DNA-directed RNA polymerase</keyword>
<keyword id="KW-0479">Metal-binding</keyword>
<keyword id="KW-0548">Nucleotidyltransferase</keyword>
<keyword id="KW-0804">Transcription</keyword>
<keyword id="KW-0808">Transferase</keyword>
<keyword id="KW-0862">Zinc</keyword>
<protein>
    <recommendedName>
        <fullName evidence="5">DNA-directed RNA polymerase subunit Rpo2C</fullName>
        <ecNumber evidence="3">2.7.7.6</ecNumber>
    </recommendedName>
    <alternativeName>
        <fullName evidence="4">DNA-directed RNA polymerase subunit B'</fullName>
    </alternativeName>
</protein>
<dbReference type="EC" id="2.7.7.6" evidence="3"/>
<dbReference type="EMBL" id="X08038">
    <property type="protein sequence ID" value="CAA30837.1"/>
    <property type="molecule type" value="Genomic_DNA"/>
</dbReference>
<dbReference type="EMBL" id="M20391">
    <property type="protein sequence ID" value="AAA72653.1"/>
    <property type="molecule type" value="Genomic_DNA"/>
</dbReference>
<dbReference type="PIR" id="S02195">
    <property type="entry name" value="S02195"/>
</dbReference>
<dbReference type="SMR" id="P09845"/>
<dbReference type="GO" id="GO:0005737">
    <property type="term" value="C:cytoplasm"/>
    <property type="evidence" value="ECO:0007669"/>
    <property type="project" value="UniProtKB-SubCell"/>
</dbReference>
<dbReference type="GO" id="GO:0000428">
    <property type="term" value="C:DNA-directed RNA polymerase complex"/>
    <property type="evidence" value="ECO:0007669"/>
    <property type="project" value="UniProtKB-KW"/>
</dbReference>
<dbReference type="GO" id="GO:0003677">
    <property type="term" value="F:DNA binding"/>
    <property type="evidence" value="ECO:0007669"/>
    <property type="project" value="UniProtKB-KW"/>
</dbReference>
<dbReference type="GO" id="GO:0003899">
    <property type="term" value="F:DNA-directed RNA polymerase activity"/>
    <property type="evidence" value="ECO:0007669"/>
    <property type="project" value="UniProtKB-EC"/>
</dbReference>
<dbReference type="GO" id="GO:0032549">
    <property type="term" value="F:ribonucleoside binding"/>
    <property type="evidence" value="ECO:0007669"/>
    <property type="project" value="InterPro"/>
</dbReference>
<dbReference type="GO" id="GO:0008270">
    <property type="term" value="F:zinc ion binding"/>
    <property type="evidence" value="ECO:0007669"/>
    <property type="project" value="InterPro"/>
</dbReference>
<dbReference type="GO" id="GO:0006351">
    <property type="term" value="P:DNA-templated transcription"/>
    <property type="evidence" value="ECO:0007669"/>
    <property type="project" value="InterPro"/>
</dbReference>
<dbReference type="CDD" id="cd00653">
    <property type="entry name" value="RNA_pol_B_RPB2"/>
    <property type="match status" value="1"/>
</dbReference>
<dbReference type="FunFam" id="2.40.270.10:FF:000011">
    <property type="entry name" value="DNA-directed RNA polymerase subunit beta"/>
    <property type="match status" value="1"/>
</dbReference>
<dbReference type="FunFam" id="3.90.1800.10:FF:000002">
    <property type="entry name" value="DNA-directed RNA polymerase subunit beta"/>
    <property type="match status" value="1"/>
</dbReference>
<dbReference type="Gene3D" id="2.40.50.150">
    <property type="match status" value="1"/>
</dbReference>
<dbReference type="Gene3D" id="3.90.1070.20">
    <property type="match status" value="1"/>
</dbReference>
<dbReference type="Gene3D" id="2.40.270.10">
    <property type="entry name" value="DNA-directed RNA polymerase, subunit 2, domain 6"/>
    <property type="match status" value="1"/>
</dbReference>
<dbReference type="Gene3D" id="3.90.1800.10">
    <property type="entry name" value="RNA polymerase alpha subunit dimerisation domain"/>
    <property type="match status" value="1"/>
</dbReference>
<dbReference type="InterPro" id="IPR015712">
    <property type="entry name" value="DNA-dir_RNA_pol_su2"/>
</dbReference>
<dbReference type="InterPro" id="IPR007120">
    <property type="entry name" value="DNA-dir_RNAP_su2_dom"/>
</dbReference>
<dbReference type="InterPro" id="IPR037033">
    <property type="entry name" value="DNA-dir_RNAP_su2_hyb_sf"/>
</dbReference>
<dbReference type="InterPro" id="IPR007121">
    <property type="entry name" value="RNA_pol_bsu_CS"/>
</dbReference>
<dbReference type="InterPro" id="IPR007646">
    <property type="entry name" value="RNA_pol_Rpb2_4"/>
</dbReference>
<dbReference type="InterPro" id="IPR007647">
    <property type="entry name" value="RNA_pol_Rpb2_5"/>
</dbReference>
<dbReference type="InterPro" id="IPR007641">
    <property type="entry name" value="RNA_pol_Rpb2_7"/>
</dbReference>
<dbReference type="InterPro" id="IPR014724">
    <property type="entry name" value="RNA_pol_RPB2_OB-fold"/>
</dbReference>
<dbReference type="InterPro" id="IPR019969">
    <property type="entry name" value="RNAP_Rpo2"/>
</dbReference>
<dbReference type="NCBIfam" id="TIGR03670">
    <property type="entry name" value="rpoB_arch"/>
    <property type="match status" value="1"/>
</dbReference>
<dbReference type="PANTHER" id="PTHR20856">
    <property type="entry name" value="DNA-DIRECTED RNA POLYMERASE I SUBUNIT 2"/>
    <property type="match status" value="1"/>
</dbReference>
<dbReference type="Pfam" id="PF04566">
    <property type="entry name" value="RNA_pol_Rpb2_4"/>
    <property type="match status" value="1"/>
</dbReference>
<dbReference type="Pfam" id="PF04567">
    <property type="entry name" value="RNA_pol_Rpb2_5"/>
    <property type="match status" value="1"/>
</dbReference>
<dbReference type="Pfam" id="PF00562">
    <property type="entry name" value="RNA_pol_Rpb2_6"/>
    <property type="match status" value="1"/>
</dbReference>
<dbReference type="Pfam" id="PF04560">
    <property type="entry name" value="RNA_pol_Rpb2_7"/>
    <property type="match status" value="1"/>
</dbReference>
<dbReference type="SUPFAM" id="SSF64484">
    <property type="entry name" value="beta and beta-prime subunits of DNA dependent RNA-polymerase"/>
    <property type="match status" value="1"/>
</dbReference>
<dbReference type="PROSITE" id="PS01166">
    <property type="entry name" value="RNA_POL_BETA"/>
    <property type="match status" value="1"/>
</dbReference>
<organism>
    <name type="scientific">Methanothermobacter thermautotrophicus (strain Winter)</name>
    <name type="common">Methanobacterium thermoautotrophicum</name>
    <dbReference type="NCBI Taxonomy" id="79930"/>
    <lineage>
        <taxon>Archaea</taxon>
        <taxon>Methanobacteriati</taxon>
        <taxon>Methanobacteriota</taxon>
        <taxon>Methanomada group</taxon>
        <taxon>Methanobacteria</taxon>
        <taxon>Methanobacteriales</taxon>
        <taxon>Methanobacteriaceae</taxon>
        <taxon>Methanothermobacter</taxon>
    </lineage>
</organism>
<name>RPO2C_METTW</name>
<feature type="chain" id="PRO_0000048104" description="DNA-directed RNA polymerase subunit Rpo2C">
    <location>
        <begin position="1"/>
        <end position="604"/>
    </location>
</feature>
<feature type="active site" evidence="1">
    <location>
        <position position="348"/>
    </location>
</feature>
<feature type="active site" evidence="1">
    <location>
        <position position="481"/>
    </location>
</feature>
<feature type="binding site" evidence="2">
    <location>
        <position position="547"/>
    </location>
    <ligand>
        <name>Zn(2+)</name>
        <dbReference type="ChEBI" id="CHEBI:29105"/>
    </ligand>
</feature>
<feature type="binding site" evidence="2">
    <location>
        <position position="550"/>
    </location>
    <ligand>
        <name>Zn(2+)</name>
        <dbReference type="ChEBI" id="CHEBI:29105"/>
    </ligand>
</feature>
<feature type="binding site" evidence="2">
    <location>
        <position position="565"/>
    </location>
    <ligand>
        <name>Zn(2+)</name>
        <dbReference type="ChEBI" id="CHEBI:29105"/>
    </ligand>
</feature>
<feature type="binding site" evidence="5">
    <location>
        <position position="568"/>
    </location>
    <ligand>
        <name>Zn(2+)</name>
        <dbReference type="ChEBI" id="CHEBI:29105"/>
    </ligand>
</feature>
<accession>P09845</accession>
<accession>P72014</accession>
<evidence type="ECO:0000250" key="1"/>
<evidence type="ECO:0000250" key="2">
    <source>
        <dbReference type="UniProtKB" id="B8YB55"/>
    </source>
</evidence>
<evidence type="ECO:0000250" key="3">
    <source>
        <dbReference type="UniProtKB" id="P11513"/>
    </source>
</evidence>
<evidence type="ECO:0000303" key="4">
    <source>
    </source>
</evidence>
<evidence type="ECO:0000305" key="5"/>
<reference key="1">
    <citation type="journal article" date="1988" name="Nucleic Acids Res.">
        <title>Relatedness of archaebacterial RNA polymerase core subunits to their eubacterial and eukaryotic equivalents.</title>
        <authorList>
            <person name="Berghoefer B."/>
            <person name="Kroeckel L."/>
            <person name="Koertner C."/>
            <person name="Truss M."/>
            <person name="Schallenberg J."/>
            <person name="Klein A."/>
        </authorList>
    </citation>
    <scope>NUCLEOTIDE SEQUENCE [GENOMIC DNA]</scope>
</reference>
<reference key="2">
    <citation type="journal article" date="1988" name="J. Bacteriol.">
        <title>Cloning and physical mapping of RNA polymerase genes from Methanobacterium thermoautotrophicum and comparison of homologies and gene orders with those of RNA polymerase genes from other methanogenic archaebacteria.</title>
        <authorList>
            <person name="Schallenberg J."/>
            <person name="Moes M."/>
            <person name="Truss M."/>
            <person name="Reiser W."/>
            <person name="Thomm M."/>
            <person name="Stetter K.O."/>
            <person name="Klein A."/>
        </authorList>
    </citation>
    <scope>NUCLEOTIDE SEQUENCE [GENOMIC DNA] OF 1-55</scope>
</reference>
<sequence>MNKTKIYINGKLIGTCDNPEEFVEEIRAKRRSGEVSHEMNITHYPENHEIYIFTDPGRARRPLIIVEDGEPLLKEEHLEKLSSGEMEWDDLISQGIIEYLDAEEEENTYIAMSPEEVTEEHTHLEIDPSTMLGICAGIIPFANHNSSPRNTMEAGMTKQALGLYASNYNLRTDTRAHLLHHPQVPIVKTRIIDVTGYDERPSGQNFVVAVMSYEGYNMEDALILNKASLERGLARSSFFRSYEATERRYPGGQEDRFEIPEKGVRGYRSERDYRHLDEDGIINPETEVSSGDVLIGKTSPPRFLEEIDEFGTVAERRRETSVTVRHGEEGIVDAVLLTETVEGSRLAKIRVREQRQPEFIGDKFASRHGQKGVVGLIVSQEDMPFTEDGVVPDLIVNPHAIPSRMSVGQVLEMLAGKAACMEGRRVDGTPFTGEEEKDLKEALKANGFESAGVETLYNGITGERIEAEIFIGVAYYQKLHHMTTDRIYARSRGPVQVLTRQPTEGRAREGGLRFGEMERDCLIAHGAALALKERLLDESDKYEALVCAECGMIAIYDKIRDKKYCPICEDSESFPVEISYAFKLLLDELKSLCIFPKLVLEDKA</sequence>